<evidence type="ECO:0000250" key="1"/>
<evidence type="ECO:0000305" key="2"/>
<feature type="chain" id="PRO_0000219529" description="Nitrogenase-stabilizing/protective protein NifW">
    <location>
        <begin position="1"/>
        <end position="113"/>
    </location>
</feature>
<organism>
    <name type="scientific">Bradyrhizobium diazoefficiens (strain JCM 10833 / BCRC 13528 / IAM 13628 / NBRC 14792 / USDA 110)</name>
    <dbReference type="NCBI Taxonomy" id="224911"/>
    <lineage>
        <taxon>Bacteria</taxon>
        <taxon>Pseudomonadati</taxon>
        <taxon>Pseudomonadota</taxon>
        <taxon>Alphaproteobacteria</taxon>
        <taxon>Hyphomicrobiales</taxon>
        <taxon>Nitrobacteraceae</taxon>
        <taxon>Bradyrhizobium</taxon>
    </lineage>
</organism>
<dbReference type="EMBL" id="AH010242">
    <property type="protein sequence ID" value="AAG60756.1"/>
    <property type="molecule type" value="Genomic_DNA"/>
</dbReference>
<dbReference type="EMBL" id="BA000040">
    <property type="protein sequence ID" value="BAC47036.1"/>
    <property type="molecule type" value="Genomic_DNA"/>
</dbReference>
<dbReference type="RefSeq" id="NP_768411.1">
    <property type="nucleotide sequence ID" value="NC_004463.1"/>
</dbReference>
<dbReference type="RefSeq" id="WP_011084580.1">
    <property type="nucleotide sequence ID" value="NZ_CP011360.1"/>
</dbReference>
<dbReference type="SMR" id="Q9ANL1"/>
<dbReference type="STRING" id="224911.AAV28_05780"/>
<dbReference type="EnsemblBacteria" id="BAC47036">
    <property type="protein sequence ID" value="BAC47036"/>
    <property type="gene ID" value="BAC47036"/>
</dbReference>
<dbReference type="GeneID" id="92969947"/>
<dbReference type="KEGG" id="bja:blr1771"/>
<dbReference type="PATRIC" id="fig|224911.44.peg.1239"/>
<dbReference type="eggNOG" id="ENOG50330W8">
    <property type="taxonomic scope" value="Bacteria"/>
</dbReference>
<dbReference type="HOGENOM" id="CLU_145318_0_0_5"/>
<dbReference type="InParanoid" id="Q9ANL1"/>
<dbReference type="OrthoDB" id="9811868at2"/>
<dbReference type="PhylomeDB" id="Q9ANL1"/>
<dbReference type="Proteomes" id="UP000002526">
    <property type="component" value="Chromosome"/>
</dbReference>
<dbReference type="GO" id="GO:0009399">
    <property type="term" value="P:nitrogen fixation"/>
    <property type="evidence" value="ECO:0007669"/>
    <property type="project" value="UniProtKB-UniRule"/>
</dbReference>
<dbReference type="HAMAP" id="MF_00529">
    <property type="entry name" value="NifW"/>
    <property type="match status" value="1"/>
</dbReference>
<dbReference type="InterPro" id="IPR004893">
    <property type="entry name" value="NifW"/>
</dbReference>
<dbReference type="NCBIfam" id="NF002009">
    <property type="entry name" value="PRK00810.1"/>
    <property type="match status" value="1"/>
</dbReference>
<dbReference type="Pfam" id="PF03206">
    <property type="entry name" value="NifW"/>
    <property type="match status" value="1"/>
</dbReference>
<dbReference type="PIRSF" id="PIRSF005790">
    <property type="entry name" value="NifW"/>
    <property type="match status" value="1"/>
</dbReference>
<reference key="1">
    <citation type="journal article" date="2001" name="J. Bacteriol.">
        <title>Potential symbiosis-specific genes uncovered by sequencing a 410-kb DNA region of the Bradyrhizobium japonicum chromosome.</title>
        <authorList>
            <person name="Goettfert M."/>
            <person name="Roethlisberger S."/>
            <person name="Kuendig C."/>
            <person name="Beck C."/>
            <person name="Marty R."/>
            <person name="Hennecke H."/>
        </authorList>
    </citation>
    <scope>NUCLEOTIDE SEQUENCE [GENOMIC DNA]</scope>
    <source>
        <strain>USDA 110spc4</strain>
    </source>
</reference>
<reference key="2">
    <citation type="journal article" date="2002" name="DNA Res.">
        <title>Complete genomic sequence of nitrogen-fixing symbiotic bacterium Bradyrhizobium japonicum USDA110.</title>
        <authorList>
            <person name="Kaneko T."/>
            <person name="Nakamura Y."/>
            <person name="Sato S."/>
            <person name="Minamisawa K."/>
            <person name="Uchiumi T."/>
            <person name="Sasamoto S."/>
            <person name="Watanabe A."/>
            <person name="Idesawa K."/>
            <person name="Iriguchi M."/>
            <person name="Kawashima K."/>
            <person name="Kohara M."/>
            <person name="Matsumoto M."/>
            <person name="Shimpo S."/>
            <person name="Tsuruoka H."/>
            <person name="Wada T."/>
            <person name="Yamada M."/>
            <person name="Tabata S."/>
        </authorList>
    </citation>
    <scope>NUCLEOTIDE SEQUENCE [LARGE SCALE GENOMIC DNA]</scope>
    <source>
        <strain>JCM 10833 / BCRC 13528 / IAM 13628 / NBRC 14792 / USDA 110</strain>
    </source>
</reference>
<accession>Q9ANL1</accession>
<name>NIFW_BRADU</name>
<protein>
    <recommendedName>
        <fullName>Nitrogenase-stabilizing/protective protein NifW</fullName>
    </recommendedName>
</protein>
<comment type="function">
    <text evidence="1">May protect the nitrogenase Fe-Mo protein from oxidative damage.</text>
</comment>
<comment type="subunit">
    <text evidence="1">Homotrimer; associates with NifD.</text>
</comment>
<comment type="similarity">
    <text evidence="2">Belongs to the NifW family.</text>
</comment>
<keyword id="KW-0535">Nitrogen fixation</keyword>
<keyword id="KW-1185">Reference proteome</keyword>
<sequence length="113" mass="12393">MISSSPATGILDRLGKASSAEEFFSLLGVEYDPKIVNVARLHILKRMGQYLAQEKFAGAAEPEIRTRCKAMLERAYGDFVASSPIDERVFKVLKDAVSDSKKAAAFVPLSELK</sequence>
<gene>
    <name type="primary">nifW</name>
    <name type="ordered locus">blr1771</name>
</gene>
<proteinExistence type="inferred from homology"/>